<evidence type="ECO:0000255" key="1">
    <source>
        <dbReference type="HAMAP-Rule" id="MF_00676"/>
    </source>
</evidence>
<accession>A8GFG2</accession>
<comment type="similarity">
    <text evidence="1">Belongs to the UPF0260 family.</text>
</comment>
<dbReference type="EMBL" id="CP000826">
    <property type="protein sequence ID" value="ABV41852.1"/>
    <property type="molecule type" value="Genomic_DNA"/>
</dbReference>
<dbReference type="STRING" id="399741.Spro_2751"/>
<dbReference type="KEGG" id="spe:Spro_2751"/>
<dbReference type="eggNOG" id="COG2983">
    <property type="taxonomic scope" value="Bacteria"/>
</dbReference>
<dbReference type="HOGENOM" id="CLU_109769_2_0_6"/>
<dbReference type="OrthoDB" id="9786855at2"/>
<dbReference type="HAMAP" id="MF_00676">
    <property type="entry name" value="UPF0260"/>
    <property type="match status" value="1"/>
</dbReference>
<dbReference type="InterPro" id="IPR005358">
    <property type="entry name" value="Puta_zinc/iron-chelating_dom"/>
</dbReference>
<dbReference type="InterPro" id="IPR008228">
    <property type="entry name" value="UCP006173"/>
</dbReference>
<dbReference type="NCBIfam" id="NF003498">
    <property type="entry name" value="PRK05170.1-1"/>
    <property type="match status" value="1"/>
</dbReference>
<dbReference type="NCBIfam" id="NF003501">
    <property type="entry name" value="PRK05170.1-5"/>
    <property type="match status" value="1"/>
</dbReference>
<dbReference type="NCBIfam" id="NF003507">
    <property type="entry name" value="PRK05170.2-5"/>
    <property type="match status" value="1"/>
</dbReference>
<dbReference type="PANTHER" id="PTHR37421">
    <property type="entry name" value="UPF0260 PROTEIN YCGN"/>
    <property type="match status" value="1"/>
</dbReference>
<dbReference type="PANTHER" id="PTHR37421:SF1">
    <property type="entry name" value="UPF0260 PROTEIN YCGN"/>
    <property type="match status" value="1"/>
</dbReference>
<dbReference type="Pfam" id="PF03692">
    <property type="entry name" value="CxxCxxCC"/>
    <property type="match status" value="1"/>
</dbReference>
<dbReference type="PIRSF" id="PIRSF006173">
    <property type="entry name" value="UCP006173"/>
    <property type="match status" value="1"/>
</dbReference>
<name>Y2751_SERP5</name>
<proteinExistence type="inferred from homology"/>
<protein>
    <recommendedName>
        <fullName evidence="1">UPF0260 protein Spro_2751</fullName>
    </recommendedName>
</protein>
<sequence>MSQTPFWQQKTLAEMSEQEWESLCDGCGQCCLNKLIDEDTDEIYFTNVACDQLNIKSCQCRNYERRFELEEDCIKLTRENLTTFDWLPPTCAYRLIGEGKPLFSWHPLVSGSKAAMHGERITVRHIAVRESEVVDWQDHIMNKPSWAR</sequence>
<reference key="1">
    <citation type="submission" date="2007-09" db="EMBL/GenBank/DDBJ databases">
        <title>Complete sequence of chromosome of Serratia proteamaculans 568.</title>
        <authorList>
            <consortium name="US DOE Joint Genome Institute"/>
            <person name="Copeland A."/>
            <person name="Lucas S."/>
            <person name="Lapidus A."/>
            <person name="Barry K."/>
            <person name="Glavina del Rio T."/>
            <person name="Dalin E."/>
            <person name="Tice H."/>
            <person name="Pitluck S."/>
            <person name="Chain P."/>
            <person name="Malfatti S."/>
            <person name="Shin M."/>
            <person name="Vergez L."/>
            <person name="Schmutz J."/>
            <person name="Larimer F."/>
            <person name="Land M."/>
            <person name="Hauser L."/>
            <person name="Kyrpides N."/>
            <person name="Kim E."/>
            <person name="Taghavi S."/>
            <person name="Newman L."/>
            <person name="Vangronsveld J."/>
            <person name="van der Lelie D."/>
            <person name="Richardson P."/>
        </authorList>
    </citation>
    <scope>NUCLEOTIDE SEQUENCE [LARGE SCALE GENOMIC DNA]</scope>
    <source>
        <strain>568</strain>
    </source>
</reference>
<feature type="chain" id="PRO_1000061962" description="UPF0260 protein Spro_2751">
    <location>
        <begin position="1"/>
        <end position="148"/>
    </location>
</feature>
<organism>
    <name type="scientific">Serratia proteamaculans (strain 568)</name>
    <dbReference type="NCBI Taxonomy" id="399741"/>
    <lineage>
        <taxon>Bacteria</taxon>
        <taxon>Pseudomonadati</taxon>
        <taxon>Pseudomonadota</taxon>
        <taxon>Gammaproteobacteria</taxon>
        <taxon>Enterobacterales</taxon>
        <taxon>Yersiniaceae</taxon>
        <taxon>Serratia</taxon>
    </lineage>
</organism>
<gene>
    <name type="ordered locus">Spro_2751</name>
</gene>